<name>RRAAH_BURM9</name>
<protein>
    <recommendedName>
        <fullName>Putative 4-hydroxy-4-methyl-2-oxoglutarate aldolase</fullName>
        <shortName>HMG aldolase</shortName>
        <ecNumber>4.1.3.17</ecNumber>
    </recommendedName>
    <alternativeName>
        <fullName>Oxaloacetate decarboxylase</fullName>
        <shortName>OAA decarboxylase</shortName>
        <ecNumber>4.1.1.112</ecNumber>
    </alternativeName>
    <alternativeName>
        <fullName>Regulator of ribonuclease activity homolog</fullName>
    </alternativeName>
    <alternativeName>
        <fullName>RraA-like protein</fullName>
    </alternativeName>
</protein>
<gene>
    <name type="ordered locus">BMA10229_A3218</name>
</gene>
<comment type="function">
    <text evidence="1">Catalyzes the aldol cleavage of 4-hydroxy-4-methyl-2-oxoglutarate (HMG) into 2 molecules of pyruvate. Also contains a secondary oxaloacetate (OAA) decarboxylase activity due to the common pyruvate enolate transition state formed following C-C bond cleavage in the retro-aldol and decarboxylation reactions (By similarity).</text>
</comment>
<comment type="catalytic activity">
    <reaction>
        <text>4-hydroxy-4-methyl-2-oxoglutarate = 2 pyruvate</text>
        <dbReference type="Rhea" id="RHEA:22748"/>
        <dbReference type="ChEBI" id="CHEBI:15361"/>
        <dbReference type="ChEBI" id="CHEBI:58276"/>
        <dbReference type="EC" id="4.1.3.17"/>
    </reaction>
</comment>
<comment type="catalytic activity">
    <reaction>
        <text>oxaloacetate + H(+) = pyruvate + CO2</text>
        <dbReference type="Rhea" id="RHEA:15641"/>
        <dbReference type="ChEBI" id="CHEBI:15361"/>
        <dbReference type="ChEBI" id="CHEBI:15378"/>
        <dbReference type="ChEBI" id="CHEBI:16452"/>
        <dbReference type="ChEBI" id="CHEBI:16526"/>
        <dbReference type="EC" id="4.1.1.112"/>
    </reaction>
</comment>
<comment type="cofactor">
    <cofactor evidence="1">
        <name>a divalent metal cation</name>
        <dbReference type="ChEBI" id="CHEBI:60240"/>
    </cofactor>
    <text evidence="1">Divalent metal cation.</text>
</comment>
<comment type="subunit">
    <text evidence="1">Homotrimer.</text>
</comment>
<comment type="similarity">
    <text evidence="2">Belongs to the class II aldolase/RraA-like family.</text>
</comment>
<evidence type="ECO:0000250" key="1"/>
<evidence type="ECO:0000305" key="2"/>
<keyword id="KW-0456">Lyase</keyword>
<keyword id="KW-0479">Metal-binding</keyword>
<dbReference type="EC" id="4.1.3.17"/>
<dbReference type="EC" id="4.1.1.112"/>
<dbReference type="EMBL" id="CP000546">
    <property type="protein sequence ID" value="ABN03182.1"/>
    <property type="molecule type" value="Genomic_DNA"/>
</dbReference>
<dbReference type="SMR" id="A2SB35"/>
<dbReference type="KEGG" id="bml:BMA10229_A3218"/>
<dbReference type="HOGENOM" id="CLU_072626_4_0_4"/>
<dbReference type="Proteomes" id="UP000002283">
    <property type="component" value="Chromosome I"/>
</dbReference>
<dbReference type="GO" id="GO:0047443">
    <property type="term" value="F:4-hydroxy-4-methyl-2-oxoglutarate aldolase activity"/>
    <property type="evidence" value="ECO:0007669"/>
    <property type="project" value="UniProtKB-EC"/>
</dbReference>
<dbReference type="GO" id="GO:0046872">
    <property type="term" value="F:metal ion binding"/>
    <property type="evidence" value="ECO:0007669"/>
    <property type="project" value="UniProtKB-KW"/>
</dbReference>
<dbReference type="GO" id="GO:0008948">
    <property type="term" value="F:oxaloacetate decarboxylase activity"/>
    <property type="evidence" value="ECO:0007669"/>
    <property type="project" value="UniProtKB-EC"/>
</dbReference>
<dbReference type="GO" id="GO:0008428">
    <property type="term" value="F:ribonuclease inhibitor activity"/>
    <property type="evidence" value="ECO:0007669"/>
    <property type="project" value="InterPro"/>
</dbReference>
<dbReference type="GO" id="GO:0051252">
    <property type="term" value="P:regulation of RNA metabolic process"/>
    <property type="evidence" value="ECO:0007669"/>
    <property type="project" value="InterPro"/>
</dbReference>
<dbReference type="CDD" id="cd16841">
    <property type="entry name" value="RraA_family"/>
    <property type="match status" value="1"/>
</dbReference>
<dbReference type="Gene3D" id="3.50.30.40">
    <property type="entry name" value="Ribonuclease E inhibitor RraA/RraA-like"/>
    <property type="match status" value="1"/>
</dbReference>
<dbReference type="InterPro" id="IPR010203">
    <property type="entry name" value="RraA"/>
</dbReference>
<dbReference type="InterPro" id="IPR005493">
    <property type="entry name" value="RraA/RraA-like"/>
</dbReference>
<dbReference type="InterPro" id="IPR036704">
    <property type="entry name" value="RraA/RraA-like_sf"/>
</dbReference>
<dbReference type="NCBIfam" id="TIGR01935">
    <property type="entry name" value="NOT-MenG"/>
    <property type="match status" value="1"/>
</dbReference>
<dbReference type="NCBIfam" id="NF006875">
    <property type="entry name" value="PRK09372.1"/>
    <property type="match status" value="1"/>
</dbReference>
<dbReference type="PANTHER" id="PTHR33254">
    <property type="entry name" value="4-HYDROXY-4-METHYL-2-OXOGLUTARATE ALDOLASE 3-RELATED"/>
    <property type="match status" value="1"/>
</dbReference>
<dbReference type="PANTHER" id="PTHR33254:SF4">
    <property type="entry name" value="4-HYDROXY-4-METHYL-2-OXOGLUTARATE ALDOLASE 3-RELATED"/>
    <property type="match status" value="1"/>
</dbReference>
<dbReference type="Pfam" id="PF03737">
    <property type="entry name" value="RraA-like"/>
    <property type="match status" value="1"/>
</dbReference>
<dbReference type="SUPFAM" id="SSF89562">
    <property type="entry name" value="RraA-like"/>
    <property type="match status" value="1"/>
</dbReference>
<proteinExistence type="inferred from homology"/>
<accession>A2SB35</accession>
<organism>
    <name type="scientific">Burkholderia mallei (strain NCTC 10229)</name>
    <dbReference type="NCBI Taxonomy" id="412022"/>
    <lineage>
        <taxon>Bacteria</taxon>
        <taxon>Pseudomonadati</taxon>
        <taxon>Pseudomonadota</taxon>
        <taxon>Betaproteobacteria</taxon>
        <taxon>Burkholderiales</taxon>
        <taxon>Burkholderiaceae</taxon>
        <taxon>Burkholderia</taxon>
        <taxon>pseudomallei group</taxon>
    </lineage>
</organism>
<feature type="chain" id="PRO_1000013826" description="Putative 4-hydroxy-4-methyl-2-oxoglutarate aldolase">
    <location>
        <begin position="1"/>
        <end position="165"/>
    </location>
</feature>
<feature type="binding site" evidence="1">
    <location>
        <begin position="80"/>
        <end position="83"/>
    </location>
    <ligand>
        <name>substrate</name>
    </ligand>
</feature>
<feature type="binding site" evidence="1">
    <location>
        <position position="102"/>
    </location>
    <ligand>
        <name>substrate</name>
    </ligand>
</feature>
<feature type="binding site" evidence="1">
    <location>
        <position position="103"/>
    </location>
    <ligand>
        <name>a divalent metal cation</name>
        <dbReference type="ChEBI" id="CHEBI:60240"/>
    </ligand>
</feature>
<sequence>MMFATTDLCDAHEDRLAAGTLRVLEPVFRPFGGVRRFAGPAATLKLFEDNSLVRTALEQDGAGRVLVVDGGGSLRCALVGGNLGKLAEKNGWAGIVVNGCVRDSDELAECRVGVLALAAHPRKSDKRGAGVSDAPVDVRGTRIVPGDWIYADADGVLVSDDALLE</sequence>
<reference key="1">
    <citation type="journal article" date="2010" name="Genome Biol. Evol.">
        <title>Continuing evolution of Burkholderia mallei through genome reduction and large-scale rearrangements.</title>
        <authorList>
            <person name="Losada L."/>
            <person name="Ronning C.M."/>
            <person name="DeShazer D."/>
            <person name="Woods D."/>
            <person name="Fedorova N."/>
            <person name="Kim H.S."/>
            <person name="Shabalina S.A."/>
            <person name="Pearson T.R."/>
            <person name="Brinkac L."/>
            <person name="Tan P."/>
            <person name="Nandi T."/>
            <person name="Crabtree J."/>
            <person name="Badger J."/>
            <person name="Beckstrom-Sternberg S."/>
            <person name="Saqib M."/>
            <person name="Schutzer S.E."/>
            <person name="Keim P."/>
            <person name="Nierman W.C."/>
        </authorList>
    </citation>
    <scope>NUCLEOTIDE SEQUENCE [LARGE SCALE GENOMIC DNA]</scope>
    <source>
        <strain>NCTC 10229</strain>
    </source>
</reference>